<dbReference type="EMBL" id="AY621365">
    <property type="protein sequence ID" value="AAT51904.1"/>
    <property type="molecule type" value="mRNA"/>
</dbReference>
<dbReference type="RefSeq" id="NP_001032641.1">
    <property type="nucleotide sequence ID" value="NM_001037552.2"/>
</dbReference>
<dbReference type="SMR" id="Q32ZF8"/>
<dbReference type="FunCoup" id="Q32ZF8">
    <property type="interactions" value="15"/>
</dbReference>
<dbReference type="PaxDb" id="10116-ENSRNOP00000051167"/>
<dbReference type="Ensembl" id="ENSRNOT00000050296.3">
    <property type="protein sequence ID" value="ENSRNOP00000051167.2"/>
    <property type="gene ID" value="ENSRNOG00000032089.3"/>
</dbReference>
<dbReference type="GeneID" id="652922"/>
<dbReference type="KEGG" id="rno:652922"/>
<dbReference type="UCSC" id="RGD:1561801">
    <property type="organism name" value="rat"/>
</dbReference>
<dbReference type="AGR" id="RGD:1561801"/>
<dbReference type="CTD" id="360212"/>
<dbReference type="RGD" id="1561801">
    <property type="gene designation" value="Defb38"/>
</dbReference>
<dbReference type="GeneTree" id="ENSGT01110000267485"/>
<dbReference type="HOGENOM" id="CLU_189296_5_1_1"/>
<dbReference type="InParanoid" id="Q32ZF8"/>
<dbReference type="OMA" id="YFECPWL"/>
<dbReference type="OrthoDB" id="9622366at2759"/>
<dbReference type="PhylomeDB" id="Q32ZF8"/>
<dbReference type="PRO" id="PR:Q32ZF8"/>
<dbReference type="Proteomes" id="UP000002494">
    <property type="component" value="Chromosome 16"/>
</dbReference>
<dbReference type="GO" id="GO:0005615">
    <property type="term" value="C:extracellular space"/>
    <property type="evidence" value="ECO:0000318"/>
    <property type="project" value="GO_Central"/>
</dbReference>
<dbReference type="GO" id="GO:0031731">
    <property type="term" value="F:CCR6 chemokine receptor binding"/>
    <property type="evidence" value="ECO:0000318"/>
    <property type="project" value="GO_Central"/>
</dbReference>
<dbReference type="GO" id="GO:0050829">
    <property type="term" value="P:defense response to Gram-negative bacterium"/>
    <property type="evidence" value="ECO:0000318"/>
    <property type="project" value="GO_Central"/>
</dbReference>
<dbReference type="GO" id="GO:0050830">
    <property type="term" value="P:defense response to Gram-positive bacterium"/>
    <property type="evidence" value="ECO:0000318"/>
    <property type="project" value="GO_Central"/>
</dbReference>
<dbReference type="GO" id="GO:0002227">
    <property type="term" value="P:innate immune response in mucosa"/>
    <property type="evidence" value="ECO:0000318"/>
    <property type="project" value="GO_Central"/>
</dbReference>
<dbReference type="InterPro" id="IPR001855">
    <property type="entry name" value="Defensin_beta-like"/>
</dbReference>
<dbReference type="PANTHER" id="PTHR21388:SF5">
    <property type="entry name" value="BETA-DEFENSIN 38"/>
    <property type="match status" value="1"/>
</dbReference>
<dbReference type="PANTHER" id="PTHR21388">
    <property type="entry name" value="BETA-DEFENSIN-RELATED"/>
    <property type="match status" value="1"/>
</dbReference>
<dbReference type="Pfam" id="PF00711">
    <property type="entry name" value="Defensin_beta"/>
    <property type="match status" value="1"/>
</dbReference>
<dbReference type="SUPFAM" id="SSF57392">
    <property type="entry name" value="Defensin-like"/>
    <property type="match status" value="1"/>
</dbReference>
<sequence length="63" mass="7345">MKISCFLLLVLSLYLFQVNQATDQDTAKCVQKKNVCYYFECPWLSISVSTCYKGKAKCCQKRY</sequence>
<keyword id="KW-0044">Antibiotic</keyword>
<keyword id="KW-0929">Antimicrobial</keyword>
<keyword id="KW-0211">Defensin</keyword>
<keyword id="KW-1015">Disulfide bond</keyword>
<keyword id="KW-1185">Reference proteome</keyword>
<keyword id="KW-0964">Secreted</keyword>
<keyword id="KW-0732">Signal</keyword>
<proteinExistence type="inferred from homology"/>
<name>DFB38_RAT</name>
<comment type="function">
    <text evidence="1">Has antibacterial activity.</text>
</comment>
<comment type="subcellular location">
    <subcellularLocation>
        <location evidence="1">Secreted</location>
    </subcellularLocation>
</comment>
<comment type="similarity">
    <text evidence="3">Belongs to the beta-defensin family.</text>
</comment>
<reference key="1">
    <citation type="journal article" date="2005" name="Physiol. Genomics">
        <title>Cross-species analysis of the mammalian beta-defensin gene family: presence of syntenic gene clusters and preferential expression in the male reproductive tract.</title>
        <authorList>
            <person name="Patil A.A."/>
            <person name="Cai Y."/>
            <person name="Sang Y."/>
            <person name="Blecha F."/>
            <person name="Zhang G."/>
        </authorList>
    </citation>
    <scope>NUCLEOTIDE SEQUENCE [MRNA]</scope>
</reference>
<organism>
    <name type="scientific">Rattus norvegicus</name>
    <name type="common">Rat</name>
    <dbReference type="NCBI Taxonomy" id="10116"/>
    <lineage>
        <taxon>Eukaryota</taxon>
        <taxon>Metazoa</taxon>
        <taxon>Chordata</taxon>
        <taxon>Craniata</taxon>
        <taxon>Vertebrata</taxon>
        <taxon>Euteleostomi</taxon>
        <taxon>Mammalia</taxon>
        <taxon>Eutheria</taxon>
        <taxon>Euarchontoglires</taxon>
        <taxon>Glires</taxon>
        <taxon>Rodentia</taxon>
        <taxon>Myomorpha</taxon>
        <taxon>Muroidea</taxon>
        <taxon>Muridae</taxon>
        <taxon>Murinae</taxon>
        <taxon>Rattus</taxon>
    </lineage>
</organism>
<protein>
    <recommendedName>
        <fullName>Beta-defensin 38</fullName>
        <shortName>BD-38</shortName>
    </recommendedName>
    <alternativeName>
        <fullName>Defensin, beta 38</fullName>
    </alternativeName>
</protein>
<evidence type="ECO:0000250" key="1"/>
<evidence type="ECO:0000255" key="2"/>
<evidence type="ECO:0000305" key="3"/>
<accession>Q32ZF8</accession>
<feature type="signal peptide" evidence="2">
    <location>
        <begin position="1"/>
        <end position="21"/>
    </location>
</feature>
<feature type="chain" id="PRO_0000352714" description="Beta-defensin 38">
    <location>
        <begin position="22"/>
        <end position="63"/>
    </location>
</feature>
<feature type="disulfide bond" evidence="1">
    <location>
        <begin position="29"/>
        <end position="58"/>
    </location>
</feature>
<feature type="disulfide bond" evidence="1">
    <location>
        <begin position="36"/>
        <end position="51"/>
    </location>
</feature>
<feature type="disulfide bond" evidence="1">
    <location>
        <begin position="41"/>
        <end position="59"/>
    </location>
</feature>
<gene>
    <name type="primary">Defb38</name>
</gene>